<dbReference type="EMBL" id="AL009126">
    <property type="protein sequence ID" value="CAB15254.1"/>
    <property type="molecule type" value="Genomic_DNA"/>
</dbReference>
<dbReference type="PIR" id="B70019">
    <property type="entry name" value="B70019"/>
</dbReference>
<dbReference type="RefSeq" id="NP_391144.1">
    <property type="nucleotide sequence ID" value="NC_000964.3"/>
</dbReference>
<dbReference type="RefSeq" id="WP_003243521.1">
    <property type="nucleotide sequence ID" value="NZ_OZ025638.1"/>
</dbReference>
<dbReference type="SMR" id="O32160"/>
<dbReference type="FunCoup" id="O32160">
    <property type="interactions" value="18"/>
</dbReference>
<dbReference type="STRING" id="224308.BSU32650"/>
<dbReference type="PaxDb" id="224308-BSU32650"/>
<dbReference type="EnsemblBacteria" id="CAB15254">
    <property type="protein sequence ID" value="CAB15254"/>
    <property type="gene ID" value="BSU_32650"/>
</dbReference>
<dbReference type="GeneID" id="936705"/>
<dbReference type="KEGG" id="bsu:BSU32650"/>
<dbReference type="PATRIC" id="fig|224308.179.peg.3535"/>
<dbReference type="eggNOG" id="ENOG5033JWA">
    <property type="taxonomic scope" value="Bacteria"/>
</dbReference>
<dbReference type="InParanoid" id="O32160"/>
<dbReference type="OrthoDB" id="2881225at2"/>
<dbReference type="BioCyc" id="BSUB:BSU32650-MONOMER"/>
<dbReference type="Proteomes" id="UP000001570">
    <property type="component" value="Chromosome"/>
</dbReference>
<protein>
    <recommendedName>
        <fullName>Uncharacterized protein YurS</fullName>
    </recommendedName>
</protein>
<evidence type="ECO:0000256" key="1">
    <source>
        <dbReference type="SAM" id="MobiDB-lite"/>
    </source>
</evidence>
<proteinExistence type="predicted"/>
<organism>
    <name type="scientific">Bacillus subtilis (strain 168)</name>
    <dbReference type="NCBI Taxonomy" id="224308"/>
    <lineage>
        <taxon>Bacteria</taxon>
        <taxon>Bacillati</taxon>
        <taxon>Bacillota</taxon>
        <taxon>Bacilli</taxon>
        <taxon>Bacillales</taxon>
        <taxon>Bacillaceae</taxon>
        <taxon>Bacillus</taxon>
    </lineage>
</organism>
<reference key="1">
    <citation type="journal article" date="1997" name="Nature">
        <title>The complete genome sequence of the Gram-positive bacterium Bacillus subtilis.</title>
        <authorList>
            <person name="Kunst F."/>
            <person name="Ogasawara N."/>
            <person name="Moszer I."/>
            <person name="Albertini A.M."/>
            <person name="Alloni G."/>
            <person name="Azevedo V."/>
            <person name="Bertero M.G."/>
            <person name="Bessieres P."/>
            <person name="Bolotin A."/>
            <person name="Borchert S."/>
            <person name="Borriss R."/>
            <person name="Boursier L."/>
            <person name="Brans A."/>
            <person name="Braun M."/>
            <person name="Brignell S.C."/>
            <person name="Bron S."/>
            <person name="Brouillet S."/>
            <person name="Bruschi C.V."/>
            <person name="Caldwell B."/>
            <person name="Capuano V."/>
            <person name="Carter N.M."/>
            <person name="Choi S.-K."/>
            <person name="Codani J.-J."/>
            <person name="Connerton I.F."/>
            <person name="Cummings N.J."/>
            <person name="Daniel R.A."/>
            <person name="Denizot F."/>
            <person name="Devine K.M."/>
            <person name="Duesterhoeft A."/>
            <person name="Ehrlich S.D."/>
            <person name="Emmerson P.T."/>
            <person name="Entian K.-D."/>
            <person name="Errington J."/>
            <person name="Fabret C."/>
            <person name="Ferrari E."/>
            <person name="Foulger D."/>
            <person name="Fritz C."/>
            <person name="Fujita M."/>
            <person name="Fujita Y."/>
            <person name="Fuma S."/>
            <person name="Galizzi A."/>
            <person name="Galleron N."/>
            <person name="Ghim S.-Y."/>
            <person name="Glaser P."/>
            <person name="Goffeau A."/>
            <person name="Golightly E.J."/>
            <person name="Grandi G."/>
            <person name="Guiseppi G."/>
            <person name="Guy B.J."/>
            <person name="Haga K."/>
            <person name="Haiech J."/>
            <person name="Harwood C.R."/>
            <person name="Henaut A."/>
            <person name="Hilbert H."/>
            <person name="Holsappel S."/>
            <person name="Hosono S."/>
            <person name="Hullo M.-F."/>
            <person name="Itaya M."/>
            <person name="Jones L.-M."/>
            <person name="Joris B."/>
            <person name="Karamata D."/>
            <person name="Kasahara Y."/>
            <person name="Klaerr-Blanchard M."/>
            <person name="Klein C."/>
            <person name="Kobayashi Y."/>
            <person name="Koetter P."/>
            <person name="Koningstein G."/>
            <person name="Krogh S."/>
            <person name="Kumano M."/>
            <person name="Kurita K."/>
            <person name="Lapidus A."/>
            <person name="Lardinois S."/>
            <person name="Lauber J."/>
            <person name="Lazarevic V."/>
            <person name="Lee S.-M."/>
            <person name="Levine A."/>
            <person name="Liu H."/>
            <person name="Masuda S."/>
            <person name="Mauel C."/>
            <person name="Medigue C."/>
            <person name="Medina N."/>
            <person name="Mellado R.P."/>
            <person name="Mizuno M."/>
            <person name="Moestl D."/>
            <person name="Nakai S."/>
            <person name="Noback M."/>
            <person name="Noone D."/>
            <person name="O'Reilly M."/>
            <person name="Ogawa K."/>
            <person name="Ogiwara A."/>
            <person name="Oudega B."/>
            <person name="Park S.-H."/>
            <person name="Parro V."/>
            <person name="Pohl T.M."/>
            <person name="Portetelle D."/>
            <person name="Porwollik S."/>
            <person name="Prescott A.M."/>
            <person name="Presecan E."/>
            <person name="Pujic P."/>
            <person name="Purnelle B."/>
            <person name="Rapoport G."/>
            <person name="Rey M."/>
            <person name="Reynolds S."/>
            <person name="Rieger M."/>
            <person name="Rivolta C."/>
            <person name="Rocha E."/>
            <person name="Roche B."/>
            <person name="Rose M."/>
            <person name="Sadaie Y."/>
            <person name="Sato T."/>
            <person name="Scanlan E."/>
            <person name="Schleich S."/>
            <person name="Schroeter R."/>
            <person name="Scoffone F."/>
            <person name="Sekiguchi J."/>
            <person name="Sekowska A."/>
            <person name="Seror S.J."/>
            <person name="Serror P."/>
            <person name="Shin B.-S."/>
            <person name="Soldo B."/>
            <person name="Sorokin A."/>
            <person name="Tacconi E."/>
            <person name="Takagi T."/>
            <person name="Takahashi H."/>
            <person name="Takemaru K."/>
            <person name="Takeuchi M."/>
            <person name="Tamakoshi A."/>
            <person name="Tanaka T."/>
            <person name="Terpstra P."/>
            <person name="Tognoni A."/>
            <person name="Tosato V."/>
            <person name="Uchiyama S."/>
            <person name="Vandenbol M."/>
            <person name="Vannier F."/>
            <person name="Vassarotti A."/>
            <person name="Viari A."/>
            <person name="Wambutt R."/>
            <person name="Wedler E."/>
            <person name="Wedler H."/>
            <person name="Weitzenegger T."/>
            <person name="Winters P."/>
            <person name="Wipat A."/>
            <person name="Yamamoto H."/>
            <person name="Yamane K."/>
            <person name="Yasumoto K."/>
            <person name="Yata K."/>
            <person name="Yoshida K."/>
            <person name="Yoshikawa H.-F."/>
            <person name="Zumstein E."/>
            <person name="Yoshikawa H."/>
            <person name="Danchin A."/>
        </authorList>
    </citation>
    <scope>NUCLEOTIDE SEQUENCE [LARGE SCALE GENOMIC DNA]</scope>
    <source>
        <strain>168</strain>
    </source>
</reference>
<name>YURS_BACSU</name>
<accession>O32160</accession>
<feature type="chain" id="PRO_0000049922" description="Uncharacterized protein YurS">
    <location>
        <begin position="1"/>
        <end position="91"/>
    </location>
</feature>
<feature type="region of interest" description="Disordered" evidence="1">
    <location>
        <begin position="71"/>
        <end position="91"/>
    </location>
</feature>
<feature type="compositionally biased region" description="Polar residues" evidence="1">
    <location>
        <begin position="76"/>
        <end position="91"/>
    </location>
</feature>
<sequence>MNENIIPLNRHTQEIPTTESVIKNSGNSEVHIDIHIDTMPIAFAILCSALAAKQMTKEEFDMAYTQLREMNRENNSRSSVKQIINQETEEE</sequence>
<gene>
    <name type="primary">yurS</name>
    <name type="ordered locus">BSU32650</name>
</gene>
<keyword id="KW-1185">Reference proteome</keyword>